<keyword id="KW-0474">Menaquinone biosynthesis</keyword>
<keyword id="KW-0489">Methyltransferase</keyword>
<keyword id="KW-0949">S-adenosyl-L-methionine</keyword>
<keyword id="KW-0808">Transferase</keyword>
<keyword id="KW-0831">Ubiquinone biosynthesis</keyword>
<proteinExistence type="inferred from homology"/>
<evidence type="ECO:0000255" key="1">
    <source>
        <dbReference type="HAMAP-Rule" id="MF_01813"/>
    </source>
</evidence>
<feature type="chain" id="PRO_1000215983" description="Ubiquinone/menaquinone biosynthesis C-methyltransferase UbiE">
    <location>
        <begin position="1"/>
        <end position="251"/>
    </location>
</feature>
<feature type="binding site" evidence="1">
    <location>
        <position position="74"/>
    </location>
    <ligand>
        <name>S-adenosyl-L-methionine</name>
        <dbReference type="ChEBI" id="CHEBI:59789"/>
    </ligand>
</feature>
<feature type="binding site" evidence="1">
    <location>
        <position position="95"/>
    </location>
    <ligand>
        <name>S-adenosyl-L-methionine</name>
        <dbReference type="ChEBI" id="CHEBI:59789"/>
    </ligand>
</feature>
<feature type="binding site" evidence="1">
    <location>
        <begin position="123"/>
        <end position="124"/>
    </location>
    <ligand>
        <name>S-adenosyl-L-methionine</name>
        <dbReference type="ChEBI" id="CHEBI:59789"/>
    </ligand>
</feature>
<feature type="binding site" evidence="1">
    <location>
        <position position="140"/>
    </location>
    <ligand>
        <name>S-adenosyl-L-methionine</name>
        <dbReference type="ChEBI" id="CHEBI:59789"/>
    </ligand>
</feature>
<reference key="1">
    <citation type="journal article" date="2009" name="J. Bacteriol.">
        <title>Genomic sequencing reveals regulatory mutations and recombinational events in the widely used MC4100 lineage of Escherichia coli K-12.</title>
        <authorList>
            <person name="Ferenci T."/>
            <person name="Zhou Z."/>
            <person name="Betteridge T."/>
            <person name="Ren Y."/>
            <person name="Liu Y."/>
            <person name="Feng L."/>
            <person name="Reeves P.R."/>
            <person name="Wang L."/>
        </authorList>
    </citation>
    <scope>NUCLEOTIDE SEQUENCE [LARGE SCALE GENOMIC DNA]</scope>
    <source>
        <strain>K12 / MC4100 / BW2952</strain>
    </source>
</reference>
<name>UBIE_ECOBW</name>
<comment type="function">
    <text evidence="1">Methyltransferase required for the conversion of demethylmenaquinol (DMKH2) to menaquinol (MKH2) and the conversion of 2-polyprenyl-6-methoxy-1,4-benzoquinol (DDMQH2) to 2-polyprenyl-3-methyl-6-methoxy-1,4-benzoquinol (DMQH2).</text>
</comment>
<comment type="catalytic activity">
    <reaction evidence="1">
        <text>a 2-demethylmenaquinol + S-adenosyl-L-methionine = a menaquinol + S-adenosyl-L-homocysteine + H(+)</text>
        <dbReference type="Rhea" id="RHEA:42640"/>
        <dbReference type="Rhea" id="RHEA-COMP:9539"/>
        <dbReference type="Rhea" id="RHEA-COMP:9563"/>
        <dbReference type="ChEBI" id="CHEBI:15378"/>
        <dbReference type="ChEBI" id="CHEBI:18151"/>
        <dbReference type="ChEBI" id="CHEBI:55437"/>
        <dbReference type="ChEBI" id="CHEBI:57856"/>
        <dbReference type="ChEBI" id="CHEBI:59789"/>
        <dbReference type="EC" id="2.1.1.163"/>
    </reaction>
</comment>
<comment type="catalytic activity">
    <reaction evidence="1">
        <text>a 2-methoxy-6-(all-trans-polyprenyl)benzene-1,4-diol + S-adenosyl-L-methionine = a 5-methoxy-2-methyl-3-(all-trans-polyprenyl)benzene-1,4-diol + S-adenosyl-L-homocysteine + H(+)</text>
        <dbReference type="Rhea" id="RHEA:28286"/>
        <dbReference type="Rhea" id="RHEA-COMP:10858"/>
        <dbReference type="Rhea" id="RHEA-COMP:10859"/>
        <dbReference type="ChEBI" id="CHEBI:15378"/>
        <dbReference type="ChEBI" id="CHEBI:57856"/>
        <dbReference type="ChEBI" id="CHEBI:59789"/>
        <dbReference type="ChEBI" id="CHEBI:84166"/>
        <dbReference type="ChEBI" id="CHEBI:84167"/>
        <dbReference type="EC" id="2.1.1.201"/>
    </reaction>
</comment>
<comment type="pathway">
    <text evidence="1">Quinol/quinone metabolism; menaquinone biosynthesis; menaquinol from 1,4-dihydroxy-2-naphthoate: step 2/2.</text>
</comment>
<comment type="pathway">
    <text evidence="1">Cofactor biosynthesis; ubiquinone biosynthesis.</text>
</comment>
<comment type="similarity">
    <text evidence="1">Belongs to the class I-like SAM-binding methyltransferase superfamily. MenG/UbiE family.</text>
</comment>
<organism>
    <name type="scientific">Escherichia coli (strain K12 / MC4100 / BW2952)</name>
    <dbReference type="NCBI Taxonomy" id="595496"/>
    <lineage>
        <taxon>Bacteria</taxon>
        <taxon>Pseudomonadati</taxon>
        <taxon>Pseudomonadota</taxon>
        <taxon>Gammaproteobacteria</taxon>
        <taxon>Enterobacterales</taxon>
        <taxon>Enterobacteriaceae</taxon>
        <taxon>Escherichia</taxon>
    </lineage>
</organism>
<accession>C5A009</accession>
<sequence>MVDKSQETTHFGFQTVAKEQKADMVAHVFHSVASKYDVMNDLMSFGIHRLWKRFTIDCSGVRRGQTVLDLAGGTGDLTAKFSRLVGETGKVVLADINESMLKMGREKLRNIGVIGNVEYVQANAEALPFPDNTFDCITISFGLRNVTDKDKALRSMYRVLKPGGRLLVLEFSKPIIEPLSKAYDAYSFHVLPRIGSLVANDADSYRYLAESIRMHPDQDTLKAMMQDAGFESVDYYNLTAGVVALHRGYKF</sequence>
<protein>
    <recommendedName>
        <fullName evidence="1">Ubiquinone/menaquinone biosynthesis C-methyltransferase UbiE</fullName>
        <ecNumber evidence="1">2.1.1.163</ecNumber>
        <ecNumber evidence="1">2.1.1.201</ecNumber>
    </recommendedName>
    <alternativeName>
        <fullName evidence="1">2-methoxy-6-polyprenyl-1,4-benzoquinol methylase</fullName>
    </alternativeName>
    <alternativeName>
        <fullName evidence="1">Demethylmenaquinone methyltransferase</fullName>
    </alternativeName>
</protein>
<dbReference type="EC" id="2.1.1.163" evidence="1"/>
<dbReference type="EC" id="2.1.1.201" evidence="1"/>
<dbReference type="EMBL" id="CP001396">
    <property type="protein sequence ID" value="ACR62065.1"/>
    <property type="molecule type" value="Genomic_DNA"/>
</dbReference>
<dbReference type="RefSeq" id="WP_000227958.1">
    <property type="nucleotide sequence ID" value="NC_012759.1"/>
</dbReference>
<dbReference type="SMR" id="C5A009"/>
<dbReference type="GeneID" id="93778102"/>
<dbReference type="KEGG" id="ebw:BWG_3511"/>
<dbReference type="HOGENOM" id="CLU_037990_0_0_6"/>
<dbReference type="UniPathway" id="UPA00079">
    <property type="reaction ID" value="UER00169"/>
</dbReference>
<dbReference type="UniPathway" id="UPA00232"/>
<dbReference type="GO" id="GO:0008425">
    <property type="term" value="F:2-methoxy-6-polyprenyl-1,4-benzoquinol methyltransferase activity"/>
    <property type="evidence" value="ECO:0007669"/>
    <property type="project" value="UniProtKB-UniRule"/>
</dbReference>
<dbReference type="GO" id="GO:0043770">
    <property type="term" value="F:demethylmenaquinone methyltransferase activity"/>
    <property type="evidence" value="ECO:0007669"/>
    <property type="project" value="UniProtKB-UniRule"/>
</dbReference>
<dbReference type="GO" id="GO:0009060">
    <property type="term" value="P:aerobic respiration"/>
    <property type="evidence" value="ECO:0007669"/>
    <property type="project" value="UniProtKB-UniRule"/>
</dbReference>
<dbReference type="GO" id="GO:0009234">
    <property type="term" value="P:menaquinone biosynthetic process"/>
    <property type="evidence" value="ECO:0007669"/>
    <property type="project" value="UniProtKB-UniRule"/>
</dbReference>
<dbReference type="GO" id="GO:0032259">
    <property type="term" value="P:methylation"/>
    <property type="evidence" value="ECO:0007669"/>
    <property type="project" value="UniProtKB-KW"/>
</dbReference>
<dbReference type="CDD" id="cd02440">
    <property type="entry name" value="AdoMet_MTases"/>
    <property type="match status" value="1"/>
</dbReference>
<dbReference type="FunFam" id="3.40.50.150:FF:000014">
    <property type="entry name" value="Ubiquinone/menaquinone biosynthesis C-methyltransferase UbiE"/>
    <property type="match status" value="1"/>
</dbReference>
<dbReference type="Gene3D" id="3.40.50.150">
    <property type="entry name" value="Vaccinia Virus protein VP39"/>
    <property type="match status" value="1"/>
</dbReference>
<dbReference type="HAMAP" id="MF_01813">
    <property type="entry name" value="MenG_UbiE_methyltr"/>
    <property type="match status" value="1"/>
</dbReference>
<dbReference type="InterPro" id="IPR029063">
    <property type="entry name" value="SAM-dependent_MTases_sf"/>
</dbReference>
<dbReference type="InterPro" id="IPR004033">
    <property type="entry name" value="UbiE/COQ5_MeTrFase"/>
</dbReference>
<dbReference type="InterPro" id="IPR023576">
    <property type="entry name" value="UbiE/COQ5_MeTrFase_CS"/>
</dbReference>
<dbReference type="NCBIfam" id="TIGR01934">
    <property type="entry name" value="MenG_MenH_UbiE"/>
    <property type="match status" value="1"/>
</dbReference>
<dbReference type="NCBIfam" id="NF001240">
    <property type="entry name" value="PRK00216.1-1"/>
    <property type="match status" value="1"/>
</dbReference>
<dbReference type="NCBIfam" id="NF001242">
    <property type="entry name" value="PRK00216.1-3"/>
    <property type="match status" value="1"/>
</dbReference>
<dbReference type="NCBIfam" id="NF001244">
    <property type="entry name" value="PRK00216.1-5"/>
    <property type="match status" value="1"/>
</dbReference>
<dbReference type="PANTHER" id="PTHR43591:SF24">
    <property type="entry name" value="2-METHOXY-6-POLYPRENYL-1,4-BENZOQUINOL METHYLASE, MITOCHONDRIAL"/>
    <property type="match status" value="1"/>
</dbReference>
<dbReference type="PANTHER" id="PTHR43591">
    <property type="entry name" value="METHYLTRANSFERASE"/>
    <property type="match status" value="1"/>
</dbReference>
<dbReference type="Pfam" id="PF01209">
    <property type="entry name" value="Ubie_methyltran"/>
    <property type="match status" value="1"/>
</dbReference>
<dbReference type="SUPFAM" id="SSF53335">
    <property type="entry name" value="S-adenosyl-L-methionine-dependent methyltransferases"/>
    <property type="match status" value="1"/>
</dbReference>
<dbReference type="PROSITE" id="PS51608">
    <property type="entry name" value="SAM_MT_UBIE"/>
    <property type="match status" value="1"/>
</dbReference>
<dbReference type="PROSITE" id="PS01183">
    <property type="entry name" value="UBIE_1"/>
    <property type="match status" value="1"/>
</dbReference>
<dbReference type="PROSITE" id="PS01184">
    <property type="entry name" value="UBIE_2"/>
    <property type="match status" value="1"/>
</dbReference>
<gene>
    <name evidence="1" type="primary">ubiE</name>
    <name type="ordered locus">BWG_3511</name>
</gene>